<protein>
    <recommendedName>
        <fullName evidence="1">Small ribosomal subunit protein uS8</fullName>
    </recommendedName>
    <alternativeName>
        <fullName evidence="2">30S ribosomal protein S8</fullName>
    </alternativeName>
</protein>
<reference key="1">
    <citation type="journal article" date="2007" name="J. Bacteriol.">
        <title>The genome sequence of avian pathogenic Escherichia coli strain O1:K1:H7 shares strong similarities with human extraintestinal pathogenic E. coli genomes.</title>
        <authorList>
            <person name="Johnson T.J."/>
            <person name="Kariyawasam S."/>
            <person name="Wannemuehler Y."/>
            <person name="Mangiamele P."/>
            <person name="Johnson S.J."/>
            <person name="Doetkott C."/>
            <person name="Skyberg J.A."/>
            <person name="Lynne A.M."/>
            <person name="Johnson J.R."/>
            <person name="Nolan L.K."/>
        </authorList>
    </citation>
    <scope>NUCLEOTIDE SEQUENCE [LARGE SCALE GENOMIC DNA]</scope>
</reference>
<proteinExistence type="inferred from homology"/>
<keyword id="KW-1185">Reference proteome</keyword>
<keyword id="KW-0687">Ribonucleoprotein</keyword>
<keyword id="KW-0689">Ribosomal protein</keyword>
<keyword id="KW-0694">RNA-binding</keyword>
<keyword id="KW-0699">rRNA-binding</keyword>
<organism>
    <name type="scientific">Escherichia coli O1:K1 / APEC</name>
    <dbReference type="NCBI Taxonomy" id="405955"/>
    <lineage>
        <taxon>Bacteria</taxon>
        <taxon>Pseudomonadati</taxon>
        <taxon>Pseudomonadota</taxon>
        <taxon>Gammaproteobacteria</taxon>
        <taxon>Enterobacterales</taxon>
        <taxon>Enterobacteriaceae</taxon>
        <taxon>Escherichia</taxon>
    </lineage>
</organism>
<gene>
    <name evidence="1" type="primary">rpsH</name>
    <name type="ordered locus">Ecok1_32910</name>
    <name type="ORF">APECO1_3143</name>
</gene>
<evidence type="ECO:0000255" key="1">
    <source>
        <dbReference type="HAMAP-Rule" id="MF_01302"/>
    </source>
</evidence>
<evidence type="ECO:0000305" key="2"/>
<accession>A1AGJ5</accession>
<name>RS8_ECOK1</name>
<comment type="function">
    <text evidence="1">One of the primary rRNA binding proteins, it binds directly to 16S rRNA central domain where it helps coordinate assembly of the platform of the 30S subunit.</text>
</comment>
<comment type="subunit">
    <text evidence="1">Part of the 30S ribosomal subunit. Contacts proteins S5 and S12.</text>
</comment>
<comment type="similarity">
    <text evidence="1">Belongs to the universal ribosomal protein uS8 family.</text>
</comment>
<dbReference type="EMBL" id="CP000468">
    <property type="protein sequence ID" value="ABJ02785.1"/>
    <property type="molecule type" value="Genomic_DNA"/>
</dbReference>
<dbReference type="RefSeq" id="WP_000062611.1">
    <property type="nucleotide sequence ID" value="NZ_CADILS010000044.1"/>
</dbReference>
<dbReference type="SMR" id="A1AGJ5"/>
<dbReference type="GeneID" id="93778681"/>
<dbReference type="KEGG" id="ecv:APECO1_3143"/>
<dbReference type="HOGENOM" id="CLU_098428_0_0_6"/>
<dbReference type="Proteomes" id="UP000008216">
    <property type="component" value="Chromosome"/>
</dbReference>
<dbReference type="GO" id="GO:1990904">
    <property type="term" value="C:ribonucleoprotein complex"/>
    <property type="evidence" value="ECO:0007669"/>
    <property type="project" value="UniProtKB-KW"/>
</dbReference>
<dbReference type="GO" id="GO:0005840">
    <property type="term" value="C:ribosome"/>
    <property type="evidence" value="ECO:0007669"/>
    <property type="project" value="UniProtKB-KW"/>
</dbReference>
<dbReference type="GO" id="GO:0019843">
    <property type="term" value="F:rRNA binding"/>
    <property type="evidence" value="ECO:0007669"/>
    <property type="project" value="UniProtKB-UniRule"/>
</dbReference>
<dbReference type="GO" id="GO:0003735">
    <property type="term" value="F:structural constituent of ribosome"/>
    <property type="evidence" value="ECO:0007669"/>
    <property type="project" value="InterPro"/>
</dbReference>
<dbReference type="GO" id="GO:0006412">
    <property type="term" value="P:translation"/>
    <property type="evidence" value="ECO:0007669"/>
    <property type="project" value="UniProtKB-UniRule"/>
</dbReference>
<dbReference type="FunFam" id="3.30.1370.30:FF:000003">
    <property type="entry name" value="30S ribosomal protein S8"/>
    <property type="match status" value="1"/>
</dbReference>
<dbReference type="FunFam" id="3.30.1490.10:FF:000001">
    <property type="entry name" value="30S ribosomal protein S8"/>
    <property type="match status" value="1"/>
</dbReference>
<dbReference type="Gene3D" id="3.30.1370.30">
    <property type="match status" value="1"/>
</dbReference>
<dbReference type="Gene3D" id="3.30.1490.10">
    <property type="match status" value="1"/>
</dbReference>
<dbReference type="HAMAP" id="MF_01302_B">
    <property type="entry name" value="Ribosomal_uS8_B"/>
    <property type="match status" value="1"/>
</dbReference>
<dbReference type="InterPro" id="IPR000630">
    <property type="entry name" value="Ribosomal_uS8"/>
</dbReference>
<dbReference type="InterPro" id="IPR047863">
    <property type="entry name" value="Ribosomal_uS8_CS"/>
</dbReference>
<dbReference type="InterPro" id="IPR035987">
    <property type="entry name" value="Ribosomal_uS8_sf"/>
</dbReference>
<dbReference type="NCBIfam" id="NF001109">
    <property type="entry name" value="PRK00136.1"/>
    <property type="match status" value="1"/>
</dbReference>
<dbReference type="PANTHER" id="PTHR11758">
    <property type="entry name" value="40S RIBOSOMAL PROTEIN S15A"/>
    <property type="match status" value="1"/>
</dbReference>
<dbReference type="Pfam" id="PF00410">
    <property type="entry name" value="Ribosomal_S8"/>
    <property type="match status" value="1"/>
</dbReference>
<dbReference type="SUPFAM" id="SSF56047">
    <property type="entry name" value="Ribosomal protein S8"/>
    <property type="match status" value="1"/>
</dbReference>
<dbReference type="PROSITE" id="PS00053">
    <property type="entry name" value="RIBOSOMAL_S8"/>
    <property type="match status" value="1"/>
</dbReference>
<sequence>MSMQDPIADMLTRIRNGQAANKAAVTMPSSKLKVAIANVLKEEGFIEDFKVEGDTKPELELTLKYFQGKAVVESIQRVSRPGLRIYKRKDELPKVMAGLGIAVVSTSKGVMTDRAARQAGLGGEIICYVA</sequence>
<feature type="chain" id="PRO_0000290836" description="Small ribosomal subunit protein uS8">
    <location>
        <begin position="1"/>
        <end position="130"/>
    </location>
</feature>